<comment type="function">
    <text evidence="1">Involved in nucleolar processing of pre-18S ribosomal RNA. Involved in ribosome biosynthesis (By similarity).</text>
</comment>
<comment type="subunit">
    <text evidence="1">Component of the ribosomal small subunit (SSU) processome.</text>
</comment>
<comment type="subcellular location">
    <subcellularLocation>
        <location evidence="1">Nucleus</location>
        <location evidence="1">Nucleolus</location>
    </subcellularLocation>
</comment>
<comment type="similarity">
    <text evidence="3">Belongs to the HEATR1/UTP10 family.</text>
</comment>
<evidence type="ECO:0000250" key="1">
    <source>
        <dbReference type="UniProtKB" id="P42945"/>
    </source>
</evidence>
<evidence type="ECO:0000256" key="2">
    <source>
        <dbReference type="SAM" id="MobiDB-lite"/>
    </source>
</evidence>
<evidence type="ECO:0000305" key="3"/>
<organism>
    <name type="scientific">Pyricularia oryzae (strain 70-15 / ATCC MYA-4617 / FGSC 8958)</name>
    <name type="common">Rice blast fungus</name>
    <name type="synonym">Magnaporthe oryzae</name>
    <dbReference type="NCBI Taxonomy" id="242507"/>
    <lineage>
        <taxon>Eukaryota</taxon>
        <taxon>Fungi</taxon>
        <taxon>Dikarya</taxon>
        <taxon>Ascomycota</taxon>
        <taxon>Pezizomycotina</taxon>
        <taxon>Sordariomycetes</taxon>
        <taxon>Sordariomycetidae</taxon>
        <taxon>Magnaporthales</taxon>
        <taxon>Pyriculariaceae</taxon>
        <taxon>Pyricularia</taxon>
    </lineage>
</organism>
<feature type="chain" id="PRO_0000308507" description="U3 small nucleolar RNA-associated protein 10">
    <location>
        <begin position="1"/>
        <end position="1796"/>
    </location>
</feature>
<feature type="repeat" description="HEAT 1">
    <location>
        <begin position="586"/>
        <end position="623"/>
    </location>
</feature>
<feature type="repeat" description="HEAT 2">
    <location>
        <begin position="656"/>
        <end position="692"/>
    </location>
</feature>
<feature type="repeat" description="HEAT 3">
    <location>
        <begin position="861"/>
        <end position="898"/>
    </location>
</feature>
<feature type="repeat" description="HEAT 4">
    <location>
        <begin position="983"/>
        <end position="1021"/>
    </location>
</feature>
<feature type="repeat" description="HEAT 5">
    <location>
        <begin position="1052"/>
        <end position="1089"/>
    </location>
</feature>
<feature type="repeat" description="HEAT 6">
    <location>
        <begin position="1161"/>
        <end position="1198"/>
    </location>
</feature>
<feature type="repeat" description="HEAT 7">
    <location>
        <begin position="1258"/>
        <end position="1295"/>
    </location>
</feature>
<feature type="repeat" description="HEAT 8">
    <location>
        <begin position="1302"/>
        <end position="1340"/>
    </location>
</feature>
<feature type="repeat" description="HEAT 9">
    <location>
        <begin position="1344"/>
        <end position="1383"/>
    </location>
</feature>
<feature type="repeat" description="HEAT 10">
    <location>
        <begin position="1492"/>
        <end position="1529"/>
    </location>
</feature>
<feature type="repeat" description="HEAT 11">
    <location>
        <begin position="1711"/>
        <end position="1748"/>
    </location>
</feature>
<feature type="repeat" description="HEAT 12">
    <location>
        <begin position="1752"/>
        <end position="1789"/>
    </location>
</feature>
<feature type="region of interest" description="Disordered" evidence="2">
    <location>
        <begin position="881"/>
        <end position="901"/>
    </location>
</feature>
<accession>A4QTQ9</accession>
<accession>G4N3L3</accession>
<proteinExistence type="inferred from homology"/>
<name>UTP10_PYRO7</name>
<reference key="1">
    <citation type="journal article" date="2005" name="Nature">
        <title>The genome sequence of the rice blast fungus Magnaporthe grisea.</title>
        <authorList>
            <person name="Dean R.A."/>
            <person name="Talbot N.J."/>
            <person name="Ebbole D.J."/>
            <person name="Farman M.L."/>
            <person name="Mitchell T.K."/>
            <person name="Orbach M.J."/>
            <person name="Thon M.R."/>
            <person name="Kulkarni R."/>
            <person name="Xu J.-R."/>
            <person name="Pan H."/>
            <person name="Read N.D."/>
            <person name="Lee Y.-H."/>
            <person name="Carbone I."/>
            <person name="Brown D."/>
            <person name="Oh Y.Y."/>
            <person name="Donofrio N."/>
            <person name="Jeong J.S."/>
            <person name="Soanes D.M."/>
            <person name="Djonovic S."/>
            <person name="Kolomiets E."/>
            <person name="Rehmeyer C."/>
            <person name="Li W."/>
            <person name="Harding M."/>
            <person name="Kim S."/>
            <person name="Lebrun M.-H."/>
            <person name="Bohnert H."/>
            <person name="Coughlan S."/>
            <person name="Butler J."/>
            <person name="Calvo S.E."/>
            <person name="Ma L.-J."/>
            <person name="Nicol R."/>
            <person name="Purcell S."/>
            <person name="Nusbaum C."/>
            <person name="Galagan J.E."/>
            <person name="Birren B.W."/>
        </authorList>
    </citation>
    <scope>NUCLEOTIDE SEQUENCE [LARGE SCALE GENOMIC DNA]</scope>
    <source>
        <strain>70-15 / ATCC MYA-4617 / FGSC 8958</strain>
    </source>
</reference>
<keyword id="KW-0539">Nucleus</keyword>
<keyword id="KW-1185">Reference proteome</keyword>
<keyword id="KW-0677">Repeat</keyword>
<keyword id="KW-0687">Ribonucleoprotein</keyword>
<keyword id="KW-0690">Ribosome biogenesis</keyword>
<keyword id="KW-0698">rRNA processing</keyword>
<dbReference type="EMBL" id="CM001233">
    <property type="protein sequence ID" value="EHA52688.1"/>
    <property type="molecule type" value="Genomic_DNA"/>
</dbReference>
<dbReference type="RefSeq" id="XP_003712495.1">
    <property type="nucleotide sequence ID" value="XM_003712447.1"/>
</dbReference>
<dbReference type="SMR" id="A4QTQ9"/>
<dbReference type="FunCoup" id="A4QTQ9">
    <property type="interactions" value="1091"/>
</dbReference>
<dbReference type="STRING" id="242507.A4QTQ9"/>
<dbReference type="GeneID" id="2675640"/>
<dbReference type="KEGG" id="mgr:MGG_04995"/>
<dbReference type="VEuPathDB" id="FungiDB:MGG_04995"/>
<dbReference type="eggNOG" id="KOG1837">
    <property type="taxonomic scope" value="Eukaryota"/>
</dbReference>
<dbReference type="HOGENOM" id="CLU_001128_3_1_1"/>
<dbReference type="InParanoid" id="A4QTQ9"/>
<dbReference type="OMA" id="NDVMWKQ"/>
<dbReference type="OrthoDB" id="31183at2759"/>
<dbReference type="Proteomes" id="UP000009058">
    <property type="component" value="Chromosome 3"/>
</dbReference>
<dbReference type="GO" id="GO:0030686">
    <property type="term" value="C:90S preribosome"/>
    <property type="evidence" value="ECO:0007669"/>
    <property type="project" value="TreeGrafter"/>
</dbReference>
<dbReference type="GO" id="GO:0005739">
    <property type="term" value="C:mitochondrion"/>
    <property type="evidence" value="ECO:0000250"/>
    <property type="project" value="PAMGO_MGG"/>
</dbReference>
<dbReference type="GO" id="GO:0032040">
    <property type="term" value="C:small-subunit processome"/>
    <property type="evidence" value="ECO:0007669"/>
    <property type="project" value="TreeGrafter"/>
</dbReference>
<dbReference type="GO" id="GO:0005732">
    <property type="term" value="C:sno(s)RNA-containing ribonucleoprotein complex"/>
    <property type="evidence" value="ECO:0000250"/>
    <property type="project" value="PAMGO_MGG"/>
</dbReference>
<dbReference type="GO" id="GO:0034455">
    <property type="term" value="C:t-UTP complex"/>
    <property type="evidence" value="ECO:0007669"/>
    <property type="project" value="TreeGrafter"/>
</dbReference>
<dbReference type="GO" id="GO:0030515">
    <property type="term" value="F:snoRNA binding"/>
    <property type="evidence" value="ECO:0000250"/>
    <property type="project" value="PAMGO_MGG"/>
</dbReference>
<dbReference type="GO" id="GO:0030490">
    <property type="term" value="P:maturation of SSU-rRNA"/>
    <property type="evidence" value="ECO:0000250"/>
    <property type="project" value="PAMGO_MGG"/>
</dbReference>
<dbReference type="GO" id="GO:0000462">
    <property type="term" value="P:maturation of SSU-rRNA from tricistronic rRNA transcript (SSU-rRNA, 5.8S rRNA, LSU-rRNA)"/>
    <property type="evidence" value="ECO:0007669"/>
    <property type="project" value="TreeGrafter"/>
</dbReference>
<dbReference type="GO" id="GO:0045943">
    <property type="term" value="P:positive regulation of transcription by RNA polymerase I"/>
    <property type="evidence" value="ECO:0007669"/>
    <property type="project" value="TreeGrafter"/>
</dbReference>
<dbReference type="GO" id="GO:0042254">
    <property type="term" value="P:ribosome biogenesis"/>
    <property type="evidence" value="ECO:0000250"/>
    <property type="project" value="PAMGO_MGG"/>
</dbReference>
<dbReference type="Gene3D" id="1.25.10.10">
    <property type="entry name" value="Leucine-rich Repeat Variant"/>
    <property type="match status" value="3"/>
</dbReference>
<dbReference type="InterPro" id="IPR011989">
    <property type="entry name" value="ARM-like"/>
</dbReference>
<dbReference type="InterPro" id="IPR016024">
    <property type="entry name" value="ARM-type_fold"/>
</dbReference>
<dbReference type="InterPro" id="IPR012954">
    <property type="entry name" value="BP28_C_dom"/>
</dbReference>
<dbReference type="InterPro" id="IPR056473">
    <property type="entry name" value="HEAT_Utp10/HEAT1"/>
</dbReference>
<dbReference type="InterPro" id="IPR022125">
    <property type="entry name" value="U3snoRNP10_N"/>
</dbReference>
<dbReference type="InterPro" id="IPR040191">
    <property type="entry name" value="UTP10"/>
</dbReference>
<dbReference type="PANTHER" id="PTHR13457">
    <property type="entry name" value="BAP28"/>
    <property type="match status" value="1"/>
</dbReference>
<dbReference type="PANTHER" id="PTHR13457:SF1">
    <property type="entry name" value="HEAT REPEAT-CONTAINING PROTEIN 1"/>
    <property type="match status" value="1"/>
</dbReference>
<dbReference type="Pfam" id="PF08146">
    <property type="entry name" value="BP28CT"/>
    <property type="match status" value="1"/>
</dbReference>
<dbReference type="Pfam" id="PF23243">
    <property type="entry name" value="HEAT_HEATR1"/>
    <property type="match status" value="1"/>
</dbReference>
<dbReference type="Pfam" id="PF12397">
    <property type="entry name" value="U3snoRNP10"/>
    <property type="match status" value="1"/>
</dbReference>
<dbReference type="SMART" id="SM01036">
    <property type="entry name" value="BP28CT"/>
    <property type="match status" value="1"/>
</dbReference>
<dbReference type="SUPFAM" id="SSF48371">
    <property type="entry name" value="ARM repeat"/>
    <property type="match status" value="1"/>
</dbReference>
<sequence>MATSLAAQLAQIAAKSRSSLNVKAQKAAHTKSLIFEPRIAAGQSYQTIYTACRDGFEELCQLDARFTPFSNTLFSEQSQDEDRSQMTQAENKELDRRVDSFLRLVGSRLRLMPAIKAIEWLIRRFRIHEFNTSTLLATFLPYHSIPAFVTLLSILPADLPQQYKFLAPYVRSLTAPPRAAIVYQATHHREFLTAITEYTLDACRNKQQYPALVSFWAGVMTEAVNGRIDINRSGRQGVQLDNDLALIALVSKPLGDAMTMKDVPDIQIAAYMVVSLLAAKANFDDKLLSVFMEQLVIGWTAETVRPGLVCLSILAQYRAPKQLSSRVAKALLKMDDLPQRLVDASKQCRVDKLAYALVLALADRLAKKGDARGLPIIKSILLLELLQEKLGKVAFKSLLRAALKMTDEVDQDGSARKQLGSTLVLLSQSAGATGVMVRQVIEDEDYDIEGLELRLDTSFGPRRLLEDKPAEEDAKDLEVRQDPKETLEAAIERLAVPPRSVKSFLSQKSDQLFDDMCKVLLSVATDPDDLLKFDEAPFLCRQTAHDDSYYFSFYMRVWCGPYPTLIRSAALEMAKRRLKQGDCAALDLQAMIPYCVAALSDPAKKVRQAAADLITVLSKSNAEGIETAKRPIWASKQLYEQSNEQTWMNPAASRALLQEIIVPALEESVLDEEHISNVLRSHLQSTKDSATGPQLSSAVRLSIFSCITSHVVHTPLLAVKSRLLKPTNQVDSVSKATRTSLLLPLLRWWASLSSTEAAQLCERERIDESKFNQSCVNVAVANDKPGLETLFEIITNSSAWTREGLVEAAFARTRKIWSTIKSDSKLKLALSMLDLAQTPATAGSSAEFVSEEAADFLRNVDLTTNILNAFLESLQDIPKITTDSPATKRRRTSSSDHSRGVSLQATNAVKAALNKVTFVLQLVEGSKPAEHPELLQSLFVTLADLQVLRSQVGSELGYLQNLVLSSLLAMMPTYKNNKSLKIDTSVGHGDVLVQCIQKSSSPAVQNSALLLVASLANTAPDVVLHSVMPIFTFMGGSVLRQSDDYSAHVVVQTIKEVIPPLVETFRKSRRNLVTSAAELLSSFVIAYEHIPSHRKRDMFISLIENLGPKDFLAALVAMFVDKYGTTDSMVAFCKDLMNSFGVEVQLQSLVMLLDLVSDCLQPKPTLAATLFNRNTDDDQDLHKTALKELTLLPKVLSSRQLRTEVSQLAGRDDMEASKFRELYASLLEKILTLAETVKTNKALHARCSDTLAGLLNLLSIGEFIKAVENLLDRPSISLRQKVLRTLEVRVDQESNTDADSRTVLLAFLPQLTAVIRDSDDIAYKHTAVACVDKIAEKYGKKDLEAVAAAATTIAGDCCLGQPDKRLRVMALLCLASLVDVLQDGIVPTLPVSLPKALSYLSESLQGEKEPELHNAVYSFFESLAVHVPYMLTKTYIGQLLAVSNVSAEANMSDESSQARFGCLQLLANQVDANTMLAALEQNWAQAVNAGFSAVEEYLKLLATVLDKHPSTIIAKHISTLSTIFLSALDLRRNVQSKDTVSIAALAKLTEIEALINDVALKMIYKLNDSKFRTVFTQLMEWVATGLPKDDKLGKVLRHQSVYSFLLAFFDNLKDVVASYASYIIDDATAILKASDPSKMEDRELWQLVLKTLARCFEHDSGGFWQVPAHFEAVSGLLVEQLEHAAALGELPGGDLVQNAVVGLAEAAASRDHRKELNAAVLRRLRSPSASVRLAAVRCEQSLTDTLGEDWLEMLSEMLPYISELQDDDDEDVEKETHRWITKIEAILGESLDAMLQ</sequence>
<protein>
    <recommendedName>
        <fullName>U3 small nucleolar RNA-associated protein 10</fullName>
    </recommendedName>
</protein>
<gene>
    <name evidence="1" type="primary">UTP10</name>
    <name type="ORF">MGG_04995</name>
</gene>